<comment type="function">
    <text evidence="1">This protein binds to 23S rRNA in the presence of protein L20.</text>
</comment>
<comment type="subunit">
    <text evidence="1">Part of the 50S ribosomal subunit. Contacts protein L20.</text>
</comment>
<comment type="similarity">
    <text evidence="1">Belongs to the bacterial ribosomal protein bL21 family.</text>
</comment>
<reference key="1">
    <citation type="journal article" date="2000" name="Nature">
        <title>The complete sequence of the mucosal pathogen Ureaplasma urealyticum.</title>
        <authorList>
            <person name="Glass J.I."/>
            <person name="Lefkowitz E.J."/>
            <person name="Glass J.S."/>
            <person name="Heiner C.R."/>
            <person name="Chen E.Y."/>
            <person name="Cassell G.H."/>
        </authorList>
    </citation>
    <scope>NUCLEOTIDE SEQUENCE [LARGE SCALE GENOMIC DNA]</scope>
    <source>
        <strain>ATCC 700970</strain>
    </source>
</reference>
<name>RL21_UREPA</name>
<evidence type="ECO:0000255" key="1">
    <source>
        <dbReference type="HAMAP-Rule" id="MF_01363"/>
    </source>
</evidence>
<evidence type="ECO:0000305" key="2"/>
<proteinExistence type="inferred from homology"/>
<accession>Q9PQT0</accession>
<feature type="chain" id="PRO_0000269419" description="Large ribosomal subunit protein bL21">
    <location>
        <begin position="1"/>
        <end position="100"/>
    </location>
</feature>
<dbReference type="EMBL" id="AF222894">
    <property type="protein sequence ID" value="AAF30620.1"/>
    <property type="molecule type" value="Genomic_DNA"/>
</dbReference>
<dbReference type="RefSeq" id="WP_006688851.1">
    <property type="nucleotide sequence ID" value="NC_002162.1"/>
</dbReference>
<dbReference type="SMR" id="Q9PQT0"/>
<dbReference type="STRING" id="273119.UU212"/>
<dbReference type="EnsemblBacteria" id="AAF30620">
    <property type="protein sequence ID" value="AAF30620"/>
    <property type="gene ID" value="UU212"/>
</dbReference>
<dbReference type="GeneID" id="29672592"/>
<dbReference type="KEGG" id="uur:UU212"/>
<dbReference type="eggNOG" id="COG0261">
    <property type="taxonomic scope" value="Bacteria"/>
</dbReference>
<dbReference type="HOGENOM" id="CLU_061463_3_1_14"/>
<dbReference type="OrthoDB" id="9813334at2"/>
<dbReference type="Proteomes" id="UP000000423">
    <property type="component" value="Chromosome"/>
</dbReference>
<dbReference type="GO" id="GO:0005737">
    <property type="term" value="C:cytoplasm"/>
    <property type="evidence" value="ECO:0007669"/>
    <property type="project" value="UniProtKB-ARBA"/>
</dbReference>
<dbReference type="GO" id="GO:1990904">
    <property type="term" value="C:ribonucleoprotein complex"/>
    <property type="evidence" value="ECO:0007669"/>
    <property type="project" value="UniProtKB-KW"/>
</dbReference>
<dbReference type="GO" id="GO:0005840">
    <property type="term" value="C:ribosome"/>
    <property type="evidence" value="ECO:0007669"/>
    <property type="project" value="UniProtKB-KW"/>
</dbReference>
<dbReference type="GO" id="GO:0019843">
    <property type="term" value="F:rRNA binding"/>
    <property type="evidence" value="ECO:0007669"/>
    <property type="project" value="UniProtKB-UniRule"/>
</dbReference>
<dbReference type="GO" id="GO:0003735">
    <property type="term" value="F:structural constituent of ribosome"/>
    <property type="evidence" value="ECO:0007669"/>
    <property type="project" value="InterPro"/>
</dbReference>
<dbReference type="GO" id="GO:0006412">
    <property type="term" value="P:translation"/>
    <property type="evidence" value="ECO:0007669"/>
    <property type="project" value="UniProtKB-UniRule"/>
</dbReference>
<dbReference type="HAMAP" id="MF_01363">
    <property type="entry name" value="Ribosomal_bL21"/>
    <property type="match status" value="1"/>
</dbReference>
<dbReference type="InterPro" id="IPR028909">
    <property type="entry name" value="bL21-like"/>
</dbReference>
<dbReference type="InterPro" id="IPR036164">
    <property type="entry name" value="bL21-like_sf"/>
</dbReference>
<dbReference type="InterPro" id="IPR001787">
    <property type="entry name" value="Ribosomal_bL21"/>
</dbReference>
<dbReference type="InterPro" id="IPR018258">
    <property type="entry name" value="Ribosomal_bL21_CS"/>
</dbReference>
<dbReference type="NCBIfam" id="TIGR00061">
    <property type="entry name" value="L21"/>
    <property type="match status" value="1"/>
</dbReference>
<dbReference type="PANTHER" id="PTHR21349">
    <property type="entry name" value="50S RIBOSOMAL PROTEIN L21"/>
    <property type="match status" value="1"/>
</dbReference>
<dbReference type="PANTHER" id="PTHR21349:SF0">
    <property type="entry name" value="LARGE RIBOSOMAL SUBUNIT PROTEIN BL21M"/>
    <property type="match status" value="1"/>
</dbReference>
<dbReference type="Pfam" id="PF00829">
    <property type="entry name" value="Ribosomal_L21p"/>
    <property type="match status" value="1"/>
</dbReference>
<dbReference type="SUPFAM" id="SSF141091">
    <property type="entry name" value="L21p-like"/>
    <property type="match status" value="1"/>
</dbReference>
<dbReference type="PROSITE" id="PS01169">
    <property type="entry name" value="RIBOSOMAL_L21"/>
    <property type="match status" value="1"/>
</dbReference>
<sequence>MFAIFQTGGKQYKVQQGEKIYVEKLDLEVGSKISFDQVIMVEGSVGTPFVKNAVVNATVIKQGKQKKINIIKFKSKKHHLKRQGHRQPYTQLVIDSISVK</sequence>
<gene>
    <name evidence="1" type="primary">rplU</name>
    <name type="ordered locus">UU212</name>
</gene>
<organism>
    <name type="scientific">Ureaplasma parvum serovar 3 (strain ATCC 700970)</name>
    <dbReference type="NCBI Taxonomy" id="273119"/>
    <lineage>
        <taxon>Bacteria</taxon>
        <taxon>Bacillati</taxon>
        <taxon>Mycoplasmatota</taxon>
        <taxon>Mycoplasmoidales</taxon>
        <taxon>Mycoplasmoidaceae</taxon>
        <taxon>Ureaplasma</taxon>
    </lineage>
</organism>
<keyword id="KW-1185">Reference proteome</keyword>
<keyword id="KW-0687">Ribonucleoprotein</keyword>
<keyword id="KW-0689">Ribosomal protein</keyword>
<keyword id="KW-0694">RNA-binding</keyword>
<keyword id="KW-0699">rRNA-binding</keyword>
<protein>
    <recommendedName>
        <fullName evidence="1">Large ribosomal subunit protein bL21</fullName>
    </recommendedName>
    <alternativeName>
        <fullName evidence="2">50S ribosomal protein L21</fullName>
    </alternativeName>
</protein>